<evidence type="ECO:0000255" key="1">
    <source>
        <dbReference type="HAMAP-Rule" id="MF_01398"/>
    </source>
</evidence>
<dbReference type="EMBL" id="CP000110">
    <property type="protein sequence ID" value="ABB35929.1"/>
    <property type="molecule type" value="Genomic_DNA"/>
</dbReference>
<dbReference type="RefSeq" id="WP_011365133.1">
    <property type="nucleotide sequence ID" value="NC_007516.1"/>
</dbReference>
<dbReference type="SMR" id="Q3AHK3"/>
<dbReference type="STRING" id="110662.Syncc9605_2190"/>
<dbReference type="KEGG" id="syd:Syncc9605_2190"/>
<dbReference type="eggNOG" id="COG0711">
    <property type="taxonomic scope" value="Bacteria"/>
</dbReference>
<dbReference type="HOGENOM" id="CLU_079215_8_1_3"/>
<dbReference type="GO" id="GO:0031676">
    <property type="term" value="C:plasma membrane-derived thylakoid membrane"/>
    <property type="evidence" value="ECO:0007669"/>
    <property type="project" value="UniProtKB-SubCell"/>
</dbReference>
<dbReference type="GO" id="GO:0045259">
    <property type="term" value="C:proton-transporting ATP synthase complex"/>
    <property type="evidence" value="ECO:0007669"/>
    <property type="project" value="UniProtKB-KW"/>
</dbReference>
<dbReference type="GO" id="GO:0046933">
    <property type="term" value="F:proton-transporting ATP synthase activity, rotational mechanism"/>
    <property type="evidence" value="ECO:0007669"/>
    <property type="project" value="UniProtKB-UniRule"/>
</dbReference>
<dbReference type="CDD" id="cd06503">
    <property type="entry name" value="ATP-synt_Fo_b"/>
    <property type="match status" value="1"/>
</dbReference>
<dbReference type="HAMAP" id="MF_01398">
    <property type="entry name" value="ATP_synth_b_bprime"/>
    <property type="match status" value="1"/>
</dbReference>
<dbReference type="InterPro" id="IPR002146">
    <property type="entry name" value="ATP_synth_b/b'su_bac/chlpt"/>
</dbReference>
<dbReference type="NCBIfam" id="NF005606">
    <property type="entry name" value="PRK07352.1"/>
    <property type="match status" value="1"/>
</dbReference>
<dbReference type="PANTHER" id="PTHR34264">
    <property type="entry name" value="ATP SYNTHASE SUBUNIT B, CHLOROPLASTIC"/>
    <property type="match status" value="1"/>
</dbReference>
<dbReference type="PANTHER" id="PTHR34264:SF3">
    <property type="entry name" value="ATP SYNTHASE SUBUNIT B, CHLOROPLASTIC"/>
    <property type="match status" value="1"/>
</dbReference>
<dbReference type="Pfam" id="PF00430">
    <property type="entry name" value="ATP-synt_B"/>
    <property type="match status" value="1"/>
</dbReference>
<gene>
    <name evidence="1" type="primary">atpF</name>
    <name type="ordered locus">Syncc9605_2190</name>
</gene>
<accession>Q3AHK3</accession>
<organism>
    <name type="scientific">Synechococcus sp. (strain CC9605)</name>
    <dbReference type="NCBI Taxonomy" id="110662"/>
    <lineage>
        <taxon>Bacteria</taxon>
        <taxon>Bacillati</taxon>
        <taxon>Cyanobacteriota</taxon>
        <taxon>Cyanophyceae</taxon>
        <taxon>Synechococcales</taxon>
        <taxon>Synechococcaceae</taxon>
        <taxon>Synechococcus</taxon>
    </lineage>
</organism>
<name>ATPF_SYNSC</name>
<feature type="chain" id="PRO_0000368827" description="ATP synthase subunit b">
    <location>
        <begin position="1"/>
        <end position="160"/>
    </location>
</feature>
<feature type="transmembrane region" description="Helical" evidence="1">
    <location>
        <begin position="15"/>
        <end position="35"/>
    </location>
</feature>
<reference key="1">
    <citation type="submission" date="2005-07" db="EMBL/GenBank/DDBJ databases">
        <title>Complete sequence of Synechococcus sp. CC9605.</title>
        <authorList>
            <consortium name="US DOE Joint Genome Institute"/>
            <person name="Copeland A."/>
            <person name="Lucas S."/>
            <person name="Lapidus A."/>
            <person name="Barry K."/>
            <person name="Detter J.C."/>
            <person name="Glavina T."/>
            <person name="Hammon N."/>
            <person name="Israni S."/>
            <person name="Pitluck S."/>
            <person name="Schmutz J."/>
            <person name="Martinez M."/>
            <person name="Larimer F."/>
            <person name="Land M."/>
            <person name="Kyrpides N."/>
            <person name="Ivanova N."/>
            <person name="Richardson P."/>
        </authorList>
    </citation>
    <scope>NUCLEOTIDE SEQUENCE [LARGE SCALE GENOMIC DNA]</scope>
    <source>
        <strain>CC9605</strain>
    </source>
</reference>
<sequence>MTLNLNPLETNLVNLVIVIGLLFWFLRGFLGGILERRRAAILQELQDAESRLKTATENLSQAQSELAAAQQKAEKIRADGQARAAGIRAEGEKRTISVMAAIKAGADADAEADAARIKDSLRREAALAAIDKALAVLPARLDASAQAKLIDSTIKNLENA</sequence>
<proteinExistence type="inferred from homology"/>
<comment type="function">
    <text evidence="1">F(1)F(0) ATP synthase produces ATP from ADP in the presence of a proton or sodium gradient. F-type ATPases consist of two structural domains, F(1) containing the extramembraneous catalytic core and F(0) containing the membrane proton channel, linked together by a central stalk and a peripheral stalk. During catalysis, ATP synthesis in the catalytic domain of F(1) is coupled via a rotary mechanism of the central stalk subunits to proton translocation.</text>
</comment>
<comment type="function">
    <text evidence="1">Component of the F(0) channel, it forms part of the peripheral stalk, linking F(1) to F(0).</text>
</comment>
<comment type="subunit">
    <text evidence="1">F-type ATPases have 2 components, F(1) - the catalytic core - and F(0) - the membrane proton channel. F(1) has five subunits: alpha(3), beta(3), gamma(1), delta(1), epsilon(1). F(0) has four main subunits: a(1), b(1), b'(1) and c(10-14). The alpha and beta chains form an alternating ring which encloses part of the gamma chain. F(1) is attached to F(0) by a central stalk formed by the gamma and epsilon chains, while a peripheral stalk is formed by the delta, b and b' chains.</text>
</comment>
<comment type="subcellular location">
    <subcellularLocation>
        <location evidence="1">Cellular thylakoid membrane</location>
        <topology evidence="1">Single-pass membrane protein</topology>
    </subcellularLocation>
</comment>
<comment type="similarity">
    <text evidence="1">Belongs to the ATPase B chain family.</text>
</comment>
<protein>
    <recommendedName>
        <fullName evidence="1">ATP synthase subunit b</fullName>
    </recommendedName>
    <alternativeName>
        <fullName evidence="1">ATP synthase F(0) sector subunit b</fullName>
    </alternativeName>
    <alternativeName>
        <fullName evidence="1">ATPase subunit I</fullName>
    </alternativeName>
    <alternativeName>
        <fullName evidence="1">F-type ATPase subunit b</fullName>
        <shortName evidence="1">F-ATPase subunit b</shortName>
    </alternativeName>
</protein>
<keyword id="KW-0066">ATP synthesis</keyword>
<keyword id="KW-0138">CF(0)</keyword>
<keyword id="KW-0375">Hydrogen ion transport</keyword>
<keyword id="KW-0406">Ion transport</keyword>
<keyword id="KW-0472">Membrane</keyword>
<keyword id="KW-0793">Thylakoid</keyword>
<keyword id="KW-0812">Transmembrane</keyword>
<keyword id="KW-1133">Transmembrane helix</keyword>
<keyword id="KW-0813">Transport</keyword>